<gene>
    <name evidence="1" type="primary">rplA</name>
    <name type="ordered locus">Sala_1441</name>
</gene>
<organism>
    <name type="scientific">Sphingopyxis alaskensis (strain DSM 13593 / LMG 18877 / RB2256)</name>
    <name type="common">Sphingomonas alaskensis</name>
    <dbReference type="NCBI Taxonomy" id="317655"/>
    <lineage>
        <taxon>Bacteria</taxon>
        <taxon>Pseudomonadati</taxon>
        <taxon>Pseudomonadota</taxon>
        <taxon>Alphaproteobacteria</taxon>
        <taxon>Sphingomonadales</taxon>
        <taxon>Sphingomonadaceae</taxon>
        <taxon>Sphingopyxis</taxon>
    </lineage>
</organism>
<sequence length="232" mass="24284">MAKLTKKQKALEGKVDAQKLHGVDEAIKLVRELATAKFDETLEIAMNLGVDPRHADQMVRGVVTLPAGTGKDVKVAVFARGDNAEKALAAGADKVGAEDLMEDMLAGNLDYGRVIATPDMMGIVGRLGKTLGPKGLMPNPKLGTVTPNVAEAVKAAKGGQIEFRVEKVGIIHAGLGKLSFGEEKLRQNFDAFVDAIVKAKPAGAKGKYVRKVALSSSMGPGVKVDTAELTGA</sequence>
<name>RL1_SPHAL</name>
<reference key="1">
    <citation type="journal article" date="2009" name="Proc. Natl. Acad. Sci. U.S.A.">
        <title>The genomic basis of trophic strategy in marine bacteria.</title>
        <authorList>
            <person name="Lauro F.M."/>
            <person name="McDougald D."/>
            <person name="Thomas T."/>
            <person name="Williams T.J."/>
            <person name="Egan S."/>
            <person name="Rice S."/>
            <person name="DeMaere M.Z."/>
            <person name="Ting L."/>
            <person name="Ertan H."/>
            <person name="Johnson J."/>
            <person name="Ferriera S."/>
            <person name="Lapidus A."/>
            <person name="Anderson I."/>
            <person name="Kyrpides N."/>
            <person name="Munk A.C."/>
            <person name="Detter C."/>
            <person name="Han C.S."/>
            <person name="Brown M.V."/>
            <person name="Robb F.T."/>
            <person name="Kjelleberg S."/>
            <person name="Cavicchioli R."/>
        </authorList>
    </citation>
    <scope>NUCLEOTIDE SEQUENCE [LARGE SCALE GENOMIC DNA]</scope>
    <source>
        <strain>DSM 13593 / LMG 18877 / RB2256</strain>
    </source>
</reference>
<keyword id="KW-1185">Reference proteome</keyword>
<keyword id="KW-0678">Repressor</keyword>
<keyword id="KW-0687">Ribonucleoprotein</keyword>
<keyword id="KW-0689">Ribosomal protein</keyword>
<keyword id="KW-0694">RNA-binding</keyword>
<keyword id="KW-0699">rRNA-binding</keyword>
<keyword id="KW-0810">Translation regulation</keyword>
<keyword id="KW-0820">tRNA-binding</keyword>
<feature type="chain" id="PRO_0000308110" description="Large ribosomal subunit protein uL1">
    <location>
        <begin position="1"/>
        <end position="232"/>
    </location>
</feature>
<comment type="function">
    <text evidence="1">Binds directly to 23S rRNA. The L1 stalk is quite mobile in the ribosome, and is involved in E site tRNA release.</text>
</comment>
<comment type="function">
    <text evidence="1">Protein L1 is also a translational repressor protein, it controls the translation of the L11 operon by binding to its mRNA.</text>
</comment>
<comment type="subunit">
    <text evidence="1">Part of the 50S ribosomal subunit.</text>
</comment>
<comment type="similarity">
    <text evidence="1">Belongs to the universal ribosomal protein uL1 family.</text>
</comment>
<evidence type="ECO:0000255" key="1">
    <source>
        <dbReference type="HAMAP-Rule" id="MF_01318"/>
    </source>
</evidence>
<evidence type="ECO:0000305" key="2"/>
<proteinExistence type="inferred from homology"/>
<accession>Q1GT68</accession>
<dbReference type="EMBL" id="CP000356">
    <property type="protein sequence ID" value="ABF53154.1"/>
    <property type="molecule type" value="Genomic_DNA"/>
</dbReference>
<dbReference type="RefSeq" id="WP_011541734.1">
    <property type="nucleotide sequence ID" value="NC_008048.1"/>
</dbReference>
<dbReference type="SMR" id="Q1GT68"/>
<dbReference type="STRING" id="317655.Sala_1441"/>
<dbReference type="KEGG" id="sal:Sala_1441"/>
<dbReference type="eggNOG" id="COG0081">
    <property type="taxonomic scope" value="Bacteria"/>
</dbReference>
<dbReference type="HOGENOM" id="CLU_062853_0_0_5"/>
<dbReference type="OrthoDB" id="9803740at2"/>
<dbReference type="Proteomes" id="UP000006578">
    <property type="component" value="Chromosome"/>
</dbReference>
<dbReference type="GO" id="GO:0022625">
    <property type="term" value="C:cytosolic large ribosomal subunit"/>
    <property type="evidence" value="ECO:0007669"/>
    <property type="project" value="TreeGrafter"/>
</dbReference>
<dbReference type="GO" id="GO:0019843">
    <property type="term" value="F:rRNA binding"/>
    <property type="evidence" value="ECO:0007669"/>
    <property type="project" value="UniProtKB-UniRule"/>
</dbReference>
<dbReference type="GO" id="GO:0003735">
    <property type="term" value="F:structural constituent of ribosome"/>
    <property type="evidence" value="ECO:0007669"/>
    <property type="project" value="InterPro"/>
</dbReference>
<dbReference type="GO" id="GO:0000049">
    <property type="term" value="F:tRNA binding"/>
    <property type="evidence" value="ECO:0007669"/>
    <property type="project" value="UniProtKB-KW"/>
</dbReference>
<dbReference type="GO" id="GO:0006417">
    <property type="term" value="P:regulation of translation"/>
    <property type="evidence" value="ECO:0007669"/>
    <property type="project" value="UniProtKB-KW"/>
</dbReference>
<dbReference type="GO" id="GO:0006412">
    <property type="term" value="P:translation"/>
    <property type="evidence" value="ECO:0007669"/>
    <property type="project" value="UniProtKB-UniRule"/>
</dbReference>
<dbReference type="CDD" id="cd00403">
    <property type="entry name" value="Ribosomal_L1"/>
    <property type="match status" value="1"/>
</dbReference>
<dbReference type="FunFam" id="3.40.50.790:FF:000001">
    <property type="entry name" value="50S ribosomal protein L1"/>
    <property type="match status" value="1"/>
</dbReference>
<dbReference type="Gene3D" id="3.30.190.20">
    <property type="match status" value="1"/>
</dbReference>
<dbReference type="Gene3D" id="3.40.50.790">
    <property type="match status" value="1"/>
</dbReference>
<dbReference type="HAMAP" id="MF_01318_B">
    <property type="entry name" value="Ribosomal_uL1_B"/>
    <property type="match status" value="1"/>
</dbReference>
<dbReference type="InterPro" id="IPR005878">
    <property type="entry name" value="Ribosom_uL1_bac-type"/>
</dbReference>
<dbReference type="InterPro" id="IPR002143">
    <property type="entry name" value="Ribosomal_uL1"/>
</dbReference>
<dbReference type="InterPro" id="IPR023674">
    <property type="entry name" value="Ribosomal_uL1-like"/>
</dbReference>
<dbReference type="InterPro" id="IPR028364">
    <property type="entry name" value="Ribosomal_uL1/biogenesis"/>
</dbReference>
<dbReference type="InterPro" id="IPR016095">
    <property type="entry name" value="Ribosomal_uL1_3-a/b-sand"/>
</dbReference>
<dbReference type="InterPro" id="IPR023673">
    <property type="entry name" value="Ribosomal_uL1_CS"/>
</dbReference>
<dbReference type="NCBIfam" id="TIGR01169">
    <property type="entry name" value="rplA_bact"/>
    <property type="match status" value="1"/>
</dbReference>
<dbReference type="PANTHER" id="PTHR36427">
    <property type="entry name" value="54S RIBOSOMAL PROTEIN L1, MITOCHONDRIAL"/>
    <property type="match status" value="1"/>
</dbReference>
<dbReference type="PANTHER" id="PTHR36427:SF3">
    <property type="entry name" value="LARGE RIBOSOMAL SUBUNIT PROTEIN UL1M"/>
    <property type="match status" value="1"/>
</dbReference>
<dbReference type="Pfam" id="PF00687">
    <property type="entry name" value="Ribosomal_L1"/>
    <property type="match status" value="1"/>
</dbReference>
<dbReference type="PIRSF" id="PIRSF002155">
    <property type="entry name" value="Ribosomal_L1"/>
    <property type="match status" value="1"/>
</dbReference>
<dbReference type="SUPFAM" id="SSF56808">
    <property type="entry name" value="Ribosomal protein L1"/>
    <property type="match status" value="1"/>
</dbReference>
<dbReference type="PROSITE" id="PS01199">
    <property type="entry name" value="RIBOSOMAL_L1"/>
    <property type="match status" value="1"/>
</dbReference>
<protein>
    <recommendedName>
        <fullName evidence="1">Large ribosomal subunit protein uL1</fullName>
    </recommendedName>
    <alternativeName>
        <fullName evidence="2">50S ribosomal protein L1</fullName>
    </alternativeName>
</protein>